<name>CH10_FRAP2</name>
<protein>
    <recommendedName>
        <fullName evidence="1">Co-chaperonin GroES</fullName>
    </recommendedName>
    <alternativeName>
        <fullName evidence="1">10 kDa chaperonin</fullName>
    </alternativeName>
    <alternativeName>
        <fullName evidence="1">Chaperonin-10</fullName>
        <shortName evidence="1">Cpn10</shortName>
    </alternativeName>
</protein>
<sequence length="95" mass="10248">MNIRPLQDRVLVRRAEEETKSAGGIILTGSAQEKPSQGEVVAVGNGKKLDNGSTQPMDVKVGDKVLFGKYSGSEVKVNDETLLMMREDDIMGIIG</sequence>
<evidence type="ECO:0000255" key="1">
    <source>
        <dbReference type="HAMAP-Rule" id="MF_00580"/>
    </source>
</evidence>
<proteinExistence type="inferred from homology"/>
<keyword id="KW-0143">Chaperone</keyword>
<keyword id="KW-0963">Cytoplasm</keyword>
<organism>
    <name type="scientific">Francisella philomiragia subsp. philomiragia (strain ATCC 25017 / CCUG 19701 / FSC 153 / O#319-036)</name>
    <dbReference type="NCBI Taxonomy" id="484022"/>
    <lineage>
        <taxon>Bacteria</taxon>
        <taxon>Pseudomonadati</taxon>
        <taxon>Pseudomonadota</taxon>
        <taxon>Gammaproteobacteria</taxon>
        <taxon>Thiotrichales</taxon>
        <taxon>Francisellaceae</taxon>
        <taxon>Francisella</taxon>
    </lineage>
</organism>
<dbReference type="EMBL" id="CP000937">
    <property type="protein sequence ID" value="ABZ87322.1"/>
    <property type="molecule type" value="Genomic_DNA"/>
</dbReference>
<dbReference type="SMR" id="B0TX64"/>
<dbReference type="KEGG" id="fph:Fphi_1098"/>
<dbReference type="eggNOG" id="COG0234">
    <property type="taxonomic scope" value="Bacteria"/>
</dbReference>
<dbReference type="HOGENOM" id="CLU_132825_2_0_6"/>
<dbReference type="GO" id="GO:0005737">
    <property type="term" value="C:cytoplasm"/>
    <property type="evidence" value="ECO:0007669"/>
    <property type="project" value="UniProtKB-SubCell"/>
</dbReference>
<dbReference type="GO" id="GO:0005524">
    <property type="term" value="F:ATP binding"/>
    <property type="evidence" value="ECO:0007669"/>
    <property type="project" value="InterPro"/>
</dbReference>
<dbReference type="GO" id="GO:0046872">
    <property type="term" value="F:metal ion binding"/>
    <property type="evidence" value="ECO:0007669"/>
    <property type="project" value="TreeGrafter"/>
</dbReference>
<dbReference type="GO" id="GO:0044183">
    <property type="term" value="F:protein folding chaperone"/>
    <property type="evidence" value="ECO:0007669"/>
    <property type="project" value="InterPro"/>
</dbReference>
<dbReference type="GO" id="GO:0051087">
    <property type="term" value="F:protein-folding chaperone binding"/>
    <property type="evidence" value="ECO:0007669"/>
    <property type="project" value="TreeGrafter"/>
</dbReference>
<dbReference type="GO" id="GO:0051082">
    <property type="term" value="F:unfolded protein binding"/>
    <property type="evidence" value="ECO:0007669"/>
    <property type="project" value="TreeGrafter"/>
</dbReference>
<dbReference type="GO" id="GO:0051085">
    <property type="term" value="P:chaperone cofactor-dependent protein refolding"/>
    <property type="evidence" value="ECO:0007669"/>
    <property type="project" value="TreeGrafter"/>
</dbReference>
<dbReference type="CDD" id="cd00320">
    <property type="entry name" value="cpn10"/>
    <property type="match status" value="1"/>
</dbReference>
<dbReference type="FunFam" id="2.30.33.40:FF:000001">
    <property type="entry name" value="10 kDa chaperonin"/>
    <property type="match status" value="1"/>
</dbReference>
<dbReference type="Gene3D" id="2.30.33.40">
    <property type="entry name" value="GroES chaperonin"/>
    <property type="match status" value="1"/>
</dbReference>
<dbReference type="HAMAP" id="MF_00580">
    <property type="entry name" value="CH10"/>
    <property type="match status" value="1"/>
</dbReference>
<dbReference type="InterPro" id="IPR020818">
    <property type="entry name" value="Chaperonin_GroES"/>
</dbReference>
<dbReference type="InterPro" id="IPR037124">
    <property type="entry name" value="Chaperonin_GroES_sf"/>
</dbReference>
<dbReference type="InterPro" id="IPR018369">
    <property type="entry name" value="Chaprnonin_Cpn10_CS"/>
</dbReference>
<dbReference type="InterPro" id="IPR011032">
    <property type="entry name" value="GroES-like_sf"/>
</dbReference>
<dbReference type="NCBIfam" id="NF001527">
    <property type="entry name" value="PRK00364.1-2"/>
    <property type="match status" value="1"/>
</dbReference>
<dbReference type="NCBIfam" id="NF001529">
    <property type="entry name" value="PRK00364.1-5"/>
    <property type="match status" value="1"/>
</dbReference>
<dbReference type="NCBIfam" id="NF001531">
    <property type="entry name" value="PRK00364.2-2"/>
    <property type="match status" value="1"/>
</dbReference>
<dbReference type="NCBIfam" id="NF001533">
    <property type="entry name" value="PRK00364.2-4"/>
    <property type="match status" value="1"/>
</dbReference>
<dbReference type="PANTHER" id="PTHR10772">
    <property type="entry name" value="10 KDA HEAT SHOCK PROTEIN"/>
    <property type="match status" value="1"/>
</dbReference>
<dbReference type="PANTHER" id="PTHR10772:SF58">
    <property type="entry name" value="CO-CHAPERONIN GROES"/>
    <property type="match status" value="1"/>
</dbReference>
<dbReference type="Pfam" id="PF00166">
    <property type="entry name" value="Cpn10"/>
    <property type="match status" value="1"/>
</dbReference>
<dbReference type="PRINTS" id="PR00297">
    <property type="entry name" value="CHAPERONIN10"/>
</dbReference>
<dbReference type="SMART" id="SM00883">
    <property type="entry name" value="Cpn10"/>
    <property type="match status" value="1"/>
</dbReference>
<dbReference type="SUPFAM" id="SSF50129">
    <property type="entry name" value="GroES-like"/>
    <property type="match status" value="1"/>
</dbReference>
<dbReference type="PROSITE" id="PS00681">
    <property type="entry name" value="CHAPERONINS_CPN10"/>
    <property type="match status" value="1"/>
</dbReference>
<gene>
    <name evidence="1" type="primary">groES</name>
    <name evidence="1" type="synonym">groS</name>
    <name type="ordered locus">Fphi_1098</name>
</gene>
<feature type="chain" id="PRO_1000082376" description="Co-chaperonin GroES">
    <location>
        <begin position="1"/>
        <end position="95"/>
    </location>
</feature>
<accession>B0TX64</accession>
<reference key="1">
    <citation type="submission" date="2007-12" db="EMBL/GenBank/DDBJ databases">
        <title>Complete sequence of chromosome of Francisella philomiragia subsp. philomiragia ATCC 25017.</title>
        <authorList>
            <consortium name="US DOE Joint Genome Institute"/>
            <person name="Copeland A."/>
            <person name="Lucas S."/>
            <person name="Lapidus A."/>
            <person name="Barry K."/>
            <person name="Detter J.C."/>
            <person name="Glavina del Rio T."/>
            <person name="Hammon N."/>
            <person name="Israni S."/>
            <person name="Dalin E."/>
            <person name="Tice H."/>
            <person name="Pitluck S."/>
            <person name="Chain P."/>
            <person name="Malfatti S."/>
            <person name="Shin M."/>
            <person name="Vergez L."/>
            <person name="Schmutz J."/>
            <person name="Larimer F."/>
            <person name="Land M."/>
            <person name="Hauser L."/>
            <person name="Richardson P."/>
        </authorList>
    </citation>
    <scope>NUCLEOTIDE SEQUENCE [LARGE SCALE GENOMIC DNA]</scope>
    <source>
        <strain>ATCC 25017 / CCUG 19701 / FSC 153 / O#319-036</strain>
    </source>
</reference>
<comment type="function">
    <text evidence="1">Together with the chaperonin GroEL, plays an essential role in assisting protein folding. The GroEL-GroES system forms a nano-cage that allows encapsulation of the non-native substrate proteins and provides a physical environment optimized to promote and accelerate protein folding. GroES binds to the apical surface of the GroEL ring, thereby capping the opening of the GroEL channel.</text>
</comment>
<comment type="subunit">
    <text evidence="1">Heptamer of 7 subunits arranged in a ring. Interacts with the chaperonin GroEL.</text>
</comment>
<comment type="subcellular location">
    <subcellularLocation>
        <location evidence="1">Cytoplasm</location>
    </subcellularLocation>
</comment>
<comment type="similarity">
    <text evidence="1">Belongs to the GroES chaperonin family.</text>
</comment>